<feature type="chain" id="PRO_0000355109" description="4-hydroxy-2-oxo-heptane-1,7-dioate aldolase">
    <location>
        <begin position="1"/>
        <end position="263"/>
    </location>
</feature>
<feature type="active site" description="Proton acceptor" evidence="1">
    <location>
        <position position="45"/>
    </location>
</feature>
<feature type="binding site" evidence="1">
    <location>
        <position position="147"/>
    </location>
    <ligand>
        <name>substrate</name>
    </ligand>
</feature>
<feature type="binding site" evidence="1">
    <location>
        <position position="149"/>
    </location>
    <ligand>
        <name>a divalent metal cation</name>
        <dbReference type="ChEBI" id="CHEBI:60240"/>
    </ligand>
</feature>
<feature type="binding site" evidence="1">
    <location>
        <position position="174"/>
    </location>
    <ligand>
        <name>substrate</name>
    </ligand>
</feature>
<feature type="binding site" evidence="1">
    <location>
        <position position="175"/>
    </location>
    <ligand>
        <name>a divalent metal cation</name>
        <dbReference type="ChEBI" id="CHEBI:60240"/>
    </ligand>
</feature>
<feature type="binding site" evidence="1">
    <location>
        <position position="175"/>
    </location>
    <ligand>
        <name>substrate</name>
    </ligand>
</feature>
<feature type="site" description="Transition state stabilizer" evidence="1">
    <location>
        <position position="70"/>
    </location>
</feature>
<feature type="site" description="Increases basicity of active site His" evidence="1">
    <location>
        <position position="84"/>
    </location>
</feature>
<comment type="function">
    <text evidence="1">Catalyzes the reversible retro-aldol cleavage of 4-hydroxy-2-ketoheptane-1,7-dioate (HKHD) to pyruvate and succinic semialdehyde.</text>
</comment>
<comment type="catalytic activity">
    <reaction evidence="1">
        <text>4-hydroxy-2-oxoheptanedioate = succinate semialdehyde + pyruvate</text>
        <dbReference type="Rhea" id="RHEA:25788"/>
        <dbReference type="ChEBI" id="CHEBI:15361"/>
        <dbReference type="ChEBI" id="CHEBI:57706"/>
        <dbReference type="ChEBI" id="CHEBI:73036"/>
        <dbReference type="EC" id="4.1.2.52"/>
    </reaction>
</comment>
<comment type="cofactor">
    <cofactor evidence="1">
        <name>a divalent metal cation</name>
        <dbReference type="ChEBI" id="CHEBI:60240"/>
    </cofactor>
    <text evidence="1">Binds 1 divalent metal cation per subunit.</text>
</comment>
<comment type="pathway">
    <text evidence="1">Aromatic compound metabolism; 4-hydroxyphenylacetate degradation; pyruvate and succinate semialdehyde from 4-hydroxyphenylacetate: step 7/7.</text>
</comment>
<comment type="subunit">
    <text evidence="1">Homohexamer; trimer of dimers.</text>
</comment>
<comment type="similarity">
    <text evidence="1">Belongs to the HpcH/HpaI aldolase family.</text>
</comment>
<name>HPCH_SALPB</name>
<reference key="1">
    <citation type="submission" date="2007-11" db="EMBL/GenBank/DDBJ databases">
        <authorList>
            <consortium name="The Salmonella enterica serovar Paratyphi B Genome Sequencing Project"/>
            <person name="McClelland M."/>
            <person name="Sanderson E.K."/>
            <person name="Porwollik S."/>
            <person name="Spieth J."/>
            <person name="Clifton W.S."/>
            <person name="Fulton R."/>
            <person name="Cordes M."/>
            <person name="Wollam A."/>
            <person name="Shah N."/>
            <person name="Pepin K."/>
            <person name="Bhonagiri V."/>
            <person name="Nash W."/>
            <person name="Johnson M."/>
            <person name="Thiruvilangam P."/>
            <person name="Wilson R."/>
        </authorList>
    </citation>
    <scope>NUCLEOTIDE SEQUENCE [LARGE SCALE GENOMIC DNA]</scope>
    <source>
        <strain>ATCC BAA-1250 / SPB7</strain>
    </source>
</reference>
<gene>
    <name evidence="1" type="primary">hpcH</name>
    <name evidence="1" type="synonym">hpaI</name>
    <name type="ordered locus">SPAB_02446</name>
</gene>
<organism>
    <name type="scientific">Salmonella paratyphi B (strain ATCC BAA-1250 / SPB7)</name>
    <dbReference type="NCBI Taxonomy" id="1016998"/>
    <lineage>
        <taxon>Bacteria</taxon>
        <taxon>Pseudomonadati</taxon>
        <taxon>Pseudomonadota</taxon>
        <taxon>Gammaproteobacteria</taxon>
        <taxon>Enterobacterales</taxon>
        <taxon>Enterobacteriaceae</taxon>
        <taxon>Salmonella</taxon>
    </lineage>
</organism>
<sequence>MKNAFKDALKAGRPQIGLWLGLANSYSAELLAGAGFDWLLIDGEHAPNNVQTVLTQLQAIAPYPSQPVVRPSWNDPVQIKQLLDVGAQTLLIPMVQNADEARNAVAATRYPPAGIRGVGSALARASRWNRIPDYLHQANDAMCVLVQIETREAMSNLASILDVDGIDGVFIGPADLSADMGFAGNPQHPEVQAAIENAIVQIRAAGKAPGILMANEALAKRYLELGALFVAVGVDTTLLARGAEALAARFGAEKKLSGASGVY</sequence>
<accession>A9N6T0</accession>
<dbReference type="EC" id="4.1.2.52" evidence="1"/>
<dbReference type="EMBL" id="CP000886">
    <property type="protein sequence ID" value="ABX67827.1"/>
    <property type="molecule type" value="Genomic_DNA"/>
</dbReference>
<dbReference type="RefSeq" id="WP_000785061.1">
    <property type="nucleotide sequence ID" value="NC_010102.1"/>
</dbReference>
<dbReference type="SMR" id="A9N6T0"/>
<dbReference type="KEGG" id="spq:SPAB_02446"/>
<dbReference type="PATRIC" id="fig|1016998.12.peg.2315"/>
<dbReference type="HOGENOM" id="CLU_059964_1_0_6"/>
<dbReference type="BioCyc" id="SENT1016998:SPAB_RS09930-MONOMER"/>
<dbReference type="UniPathway" id="UPA00208">
    <property type="reaction ID" value="UER00422"/>
</dbReference>
<dbReference type="Proteomes" id="UP000008556">
    <property type="component" value="Chromosome"/>
</dbReference>
<dbReference type="GO" id="GO:0005737">
    <property type="term" value="C:cytoplasm"/>
    <property type="evidence" value="ECO:0007669"/>
    <property type="project" value="TreeGrafter"/>
</dbReference>
<dbReference type="GO" id="GO:0043863">
    <property type="term" value="F:4-hydroxy-2-ketopimelate aldolase activity"/>
    <property type="evidence" value="ECO:0007669"/>
    <property type="project" value="RHEA"/>
</dbReference>
<dbReference type="GO" id="GO:0046872">
    <property type="term" value="F:metal ion binding"/>
    <property type="evidence" value="ECO:0007669"/>
    <property type="project" value="UniProtKB-UniRule"/>
</dbReference>
<dbReference type="GO" id="GO:1901023">
    <property type="term" value="P:4-hydroxyphenylacetate catabolic process"/>
    <property type="evidence" value="ECO:0007669"/>
    <property type="project" value="UniProtKB-UniRule"/>
</dbReference>
<dbReference type="GO" id="GO:0010124">
    <property type="term" value="P:phenylacetate catabolic process"/>
    <property type="evidence" value="ECO:0007669"/>
    <property type="project" value="InterPro"/>
</dbReference>
<dbReference type="FunFam" id="3.20.20.60:FF:000004">
    <property type="entry name" value="5-keto-4-deoxy-D-glucarate aldolase"/>
    <property type="match status" value="1"/>
</dbReference>
<dbReference type="Gene3D" id="3.20.20.60">
    <property type="entry name" value="Phosphoenolpyruvate-binding domains"/>
    <property type="match status" value="1"/>
</dbReference>
<dbReference type="HAMAP" id="MF_01292">
    <property type="entry name" value="HKHD_aldolase"/>
    <property type="match status" value="1"/>
</dbReference>
<dbReference type="InterPro" id="IPR005000">
    <property type="entry name" value="Aldolase/citrate-lyase_domain"/>
</dbReference>
<dbReference type="InterPro" id="IPR023701">
    <property type="entry name" value="HKHD_aldolase_ent"/>
</dbReference>
<dbReference type="InterPro" id="IPR012689">
    <property type="entry name" value="HpaI"/>
</dbReference>
<dbReference type="InterPro" id="IPR050251">
    <property type="entry name" value="HpcH-HpaI_aldolase"/>
</dbReference>
<dbReference type="InterPro" id="IPR015813">
    <property type="entry name" value="Pyrv/PenolPyrv_kinase-like_dom"/>
</dbReference>
<dbReference type="InterPro" id="IPR040442">
    <property type="entry name" value="Pyrv_kinase-like_dom_sf"/>
</dbReference>
<dbReference type="NCBIfam" id="TIGR02311">
    <property type="entry name" value="HpaI"/>
    <property type="match status" value="1"/>
</dbReference>
<dbReference type="PANTHER" id="PTHR30502">
    <property type="entry name" value="2-KETO-3-DEOXY-L-RHAMNONATE ALDOLASE"/>
    <property type="match status" value="1"/>
</dbReference>
<dbReference type="PANTHER" id="PTHR30502:SF0">
    <property type="entry name" value="PHOSPHOENOLPYRUVATE CARBOXYLASE FAMILY PROTEIN"/>
    <property type="match status" value="1"/>
</dbReference>
<dbReference type="Pfam" id="PF03328">
    <property type="entry name" value="HpcH_HpaI"/>
    <property type="match status" value="1"/>
</dbReference>
<dbReference type="SUPFAM" id="SSF51621">
    <property type="entry name" value="Phosphoenolpyruvate/pyruvate domain"/>
    <property type="match status" value="1"/>
</dbReference>
<evidence type="ECO:0000255" key="1">
    <source>
        <dbReference type="HAMAP-Rule" id="MF_01292"/>
    </source>
</evidence>
<keyword id="KW-0058">Aromatic hydrocarbons catabolism</keyword>
<keyword id="KW-0456">Lyase</keyword>
<keyword id="KW-0479">Metal-binding</keyword>
<proteinExistence type="inferred from homology"/>
<protein>
    <recommendedName>
        <fullName evidence="1">4-hydroxy-2-oxo-heptane-1,7-dioate aldolase</fullName>
        <ecNumber evidence="1">4.1.2.52</ecNumber>
    </recommendedName>
    <alternativeName>
        <fullName evidence="1">2,4-dihydroxyhept-2-ene-1,7-dioic acid aldolase</fullName>
        <shortName evidence="1">HHED aldolase</shortName>
    </alternativeName>
    <alternativeName>
        <fullName evidence="1">4-hydroxy-2-ketoheptane-1,7-dioate aldolase</fullName>
        <shortName evidence="1">HKHD aldolase</shortName>
    </alternativeName>
</protein>